<evidence type="ECO:0000250" key="1"/>
<evidence type="ECO:0000305" key="2"/>
<organism>
    <name type="scientific">African swine fever virus (isolate Pig/Kenya/KEN-50/1950)</name>
    <name type="common">ASFV</name>
    <dbReference type="NCBI Taxonomy" id="561445"/>
    <lineage>
        <taxon>Viruses</taxon>
        <taxon>Varidnaviria</taxon>
        <taxon>Bamfordvirae</taxon>
        <taxon>Nucleocytoviricota</taxon>
        <taxon>Pokkesviricetes</taxon>
        <taxon>Asfuvirales</taxon>
        <taxon>Asfarviridae</taxon>
        <taxon>Asfivirus</taxon>
        <taxon>African swine fever virus</taxon>
    </lineage>
</organism>
<name>3002R_ASFK5</name>
<accession>P0C9K9</accession>
<feature type="chain" id="PRO_0000373233" description="Protein MGF 300-2R">
    <location>
        <begin position="1"/>
        <end position="160"/>
    </location>
</feature>
<proteinExistence type="inferred from homology"/>
<organismHost>
    <name type="scientific">Ornithodoros</name>
    <name type="common">relapsing fever ticks</name>
    <dbReference type="NCBI Taxonomy" id="6937"/>
</organismHost>
<organismHost>
    <name type="scientific">Phacochoerus aethiopicus</name>
    <name type="common">Warthog</name>
    <dbReference type="NCBI Taxonomy" id="85517"/>
</organismHost>
<organismHost>
    <name type="scientific">Phacochoerus africanus</name>
    <name type="common">Warthog</name>
    <dbReference type="NCBI Taxonomy" id="41426"/>
</organismHost>
<organismHost>
    <name type="scientific">Potamochoerus larvatus</name>
    <name type="common">Bushpig</name>
    <dbReference type="NCBI Taxonomy" id="273792"/>
</organismHost>
<organismHost>
    <name type="scientific">Sus scrofa</name>
    <name type="common">Pig</name>
    <dbReference type="NCBI Taxonomy" id="9823"/>
</organismHost>
<reference key="1">
    <citation type="submission" date="2003-03" db="EMBL/GenBank/DDBJ databases">
        <title>African swine fever virus genomes.</title>
        <authorList>
            <person name="Kutish G.F."/>
            <person name="Rock D.L."/>
        </authorList>
    </citation>
    <scope>NUCLEOTIDE SEQUENCE [LARGE SCALE GENOMIC DNA]</scope>
</reference>
<protein>
    <recommendedName>
        <fullName>Protein MGF 300-2R</fullName>
    </recommendedName>
</protein>
<dbReference type="EMBL" id="AY261360">
    <property type="status" value="NOT_ANNOTATED_CDS"/>
    <property type="molecule type" value="Genomic_DNA"/>
</dbReference>
<dbReference type="Proteomes" id="UP000000861">
    <property type="component" value="Segment"/>
</dbReference>
<sequence>MITLYEAAIKTLITHRKQILKHPDSREILLALGLYWNKTHILLKCHECGKISLTGKHSTKCININCLLILAIKKKNKRMVDTLIGMGADVTYIHFLKNKTKLSYNQLSALKSNSQISLKEFRAICYILYSRLPKKIKQGIRLCKTMAGLCGELLCAFFAP</sequence>
<gene>
    <name type="ordered locus">Ken-028</name>
</gene>
<comment type="function">
    <text evidence="1">Plays a role in virus cell tropism, and may be required for efficient virus replication in macrophages.</text>
</comment>
<comment type="similarity">
    <text evidence="2">Belongs to the asfivirus MGF 300 family.</text>
</comment>
<comment type="sequence caution" evidence="2">
    <conflict type="frameshift">
        <sequence resource="EMBL" id="AY261360"/>
    </conflict>
    <text>Necessary to have the complete MGF 300-2R sequence, either the protein is truncated in the N-terminal part, or an error occured in the sequencing.</text>
</comment>